<comment type="function">
    <text evidence="2">May play a role in cartilage scaffolding.</text>
</comment>
<comment type="subcellular location">
    <subcellularLocation>
        <location evidence="7">Secreted</location>
        <location evidence="7">Extracellular space</location>
        <location evidence="7">Extracellular matrix</location>
    </subcellularLocation>
</comment>
<comment type="tissue specificity">
    <text evidence="6 7">Expressed in articular chondrocytes but not in knee meniscal cartilage cells (PubMed:12746903). Localizes to the intermediate to deep zone of articular cartilage (PubMed:21880736).</text>
</comment>
<comment type="PTM">
    <text evidence="1">May be cleaved into 2 chains possibly by a furin-like protease upon or preceding secretion.</text>
</comment>
<proteinExistence type="evidence at protein level"/>
<dbReference type="EMBL" id="AF542080">
    <property type="protein sequence ID" value="AAN17826.1"/>
    <property type="molecule type" value="mRNA"/>
</dbReference>
<dbReference type="EMBL" id="BC018939">
    <property type="protein sequence ID" value="AAH18939.2"/>
    <property type="molecule type" value="mRNA"/>
</dbReference>
<dbReference type="EMBL" id="BC034926">
    <property type="protein sequence ID" value="AAH34926.2"/>
    <property type="molecule type" value="mRNA"/>
</dbReference>
<dbReference type="CCDS" id="CCDS12405.1"/>
<dbReference type="RefSeq" id="NP_694953.2">
    <property type="nucleotide sequence ID" value="NM_153221.2"/>
</dbReference>
<dbReference type="BioGRID" id="127119">
    <property type="interactions" value="47"/>
</dbReference>
<dbReference type="FunCoup" id="Q8IUL8">
    <property type="interactions" value="221"/>
</dbReference>
<dbReference type="IntAct" id="Q8IUL8">
    <property type="interactions" value="26"/>
</dbReference>
<dbReference type="STRING" id="9606.ENSP00000291495"/>
<dbReference type="GlyCosmos" id="Q8IUL8">
    <property type="glycosylation" value="3 sites, No reported glycans"/>
</dbReference>
<dbReference type="GlyGen" id="Q8IUL8">
    <property type="glycosylation" value="6 sites, 2 N-linked glycans (2 sites), 1 O-linked glycan (2 sites)"/>
</dbReference>
<dbReference type="iPTMnet" id="Q8IUL8"/>
<dbReference type="PhosphoSitePlus" id="Q8IUL8"/>
<dbReference type="BioMuta" id="CILP2"/>
<dbReference type="DMDM" id="68565198"/>
<dbReference type="jPOST" id="Q8IUL8"/>
<dbReference type="MassIVE" id="Q8IUL8"/>
<dbReference type="PaxDb" id="9606-ENSP00000291495"/>
<dbReference type="PeptideAtlas" id="Q8IUL8"/>
<dbReference type="ProteomicsDB" id="70584"/>
<dbReference type="Antibodypedia" id="48010">
    <property type="antibodies" value="76 antibodies from 18 providers"/>
</dbReference>
<dbReference type="DNASU" id="148113"/>
<dbReference type="Ensembl" id="ENST00000291495.5">
    <property type="protein sequence ID" value="ENSP00000291495.3"/>
    <property type="gene ID" value="ENSG00000160161.9"/>
</dbReference>
<dbReference type="GeneID" id="148113"/>
<dbReference type="KEGG" id="hsa:148113"/>
<dbReference type="MANE-Select" id="ENST00000291495.5">
    <property type="protein sequence ID" value="ENSP00000291495.3"/>
    <property type="RefSeq nucleotide sequence ID" value="NM_153221.2"/>
    <property type="RefSeq protein sequence ID" value="NP_694953.2"/>
</dbReference>
<dbReference type="UCSC" id="uc002nmv.4">
    <property type="organism name" value="human"/>
</dbReference>
<dbReference type="AGR" id="HGNC:24213"/>
<dbReference type="CTD" id="148113"/>
<dbReference type="DisGeNET" id="148113"/>
<dbReference type="GeneCards" id="CILP2"/>
<dbReference type="HGNC" id="HGNC:24213">
    <property type="gene designation" value="CILP2"/>
</dbReference>
<dbReference type="HPA" id="ENSG00000160161">
    <property type="expression patterns" value="Tissue enhanced (ovary, testis)"/>
</dbReference>
<dbReference type="MIM" id="612419">
    <property type="type" value="gene"/>
</dbReference>
<dbReference type="neXtProt" id="NX_Q8IUL8"/>
<dbReference type="OpenTargets" id="ENSG00000160161"/>
<dbReference type="PharmGKB" id="PA134970563"/>
<dbReference type="VEuPathDB" id="HostDB:ENSG00000160161"/>
<dbReference type="eggNOG" id="ENOG502QQ8H">
    <property type="taxonomic scope" value="Eukaryota"/>
</dbReference>
<dbReference type="GeneTree" id="ENSGT00390000008152"/>
<dbReference type="InParanoid" id="Q8IUL8"/>
<dbReference type="OMA" id="RLEKPYM"/>
<dbReference type="OrthoDB" id="9929167at2759"/>
<dbReference type="PAN-GO" id="Q8IUL8">
    <property type="GO annotations" value="1 GO annotation based on evolutionary models"/>
</dbReference>
<dbReference type="PhylomeDB" id="Q8IUL8"/>
<dbReference type="TreeFam" id="TF330132"/>
<dbReference type="PathwayCommons" id="Q8IUL8"/>
<dbReference type="SignaLink" id="Q8IUL8"/>
<dbReference type="BioGRID-ORCS" id="148113">
    <property type="hits" value="19 hits in 1146 CRISPR screens"/>
</dbReference>
<dbReference type="GenomeRNAi" id="148113"/>
<dbReference type="Pharos" id="Q8IUL8">
    <property type="development level" value="Tbio"/>
</dbReference>
<dbReference type="PRO" id="PR:Q8IUL8"/>
<dbReference type="Proteomes" id="UP000005640">
    <property type="component" value="Chromosome 19"/>
</dbReference>
<dbReference type="RNAct" id="Q8IUL8">
    <property type="molecule type" value="protein"/>
</dbReference>
<dbReference type="Bgee" id="ENSG00000160161">
    <property type="expression patterns" value="Expressed in cartilage tissue and 98 other cell types or tissues"/>
</dbReference>
<dbReference type="ExpressionAtlas" id="Q8IUL8">
    <property type="expression patterns" value="baseline and differential"/>
</dbReference>
<dbReference type="GO" id="GO:0070062">
    <property type="term" value="C:extracellular exosome"/>
    <property type="evidence" value="ECO:0007005"/>
    <property type="project" value="UniProtKB"/>
</dbReference>
<dbReference type="GO" id="GO:0005615">
    <property type="term" value="C:extracellular space"/>
    <property type="evidence" value="ECO:0000318"/>
    <property type="project" value="GO_Central"/>
</dbReference>
<dbReference type="FunFam" id="2.20.100.10:FF:000051">
    <property type="entry name" value="Cartilage intermediate layer protein 2"/>
    <property type="match status" value="1"/>
</dbReference>
<dbReference type="FunFam" id="2.60.40.10:FF:001254">
    <property type="entry name" value="Cartilage intermediate layer protein 2"/>
    <property type="match status" value="1"/>
</dbReference>
<dbReference type="Gene3D" id="2.60.40.10">
    <property type="entry name" value="Immunoglobulins"/>
    <property type="match status" value="1"/>
</dbReference>
<dbReference type="Gene3D" id="2.20.100.10">
    <property type="entry name" value="Thrombospondin type-1 (TSP1) repeat"/>
    <property type="match status" value="1"/>
</dbReference>
<dbReference type="InterPro" id="IPR008969">
    <property type="entry name" value="CarboxyPept-like_regulatory"/>
</dbReference>
<dbReference type="InterPro" id="IPR056257">
    <property type="entry name" value="CILP-1/2_8th"/>
</dbReference>
<dbReference type="InterPro" id="IPR056256">
    <property type="entry name" value="CILP-1/2_b-sand_dom2"/>
</dbReference>
<dbReference type="InterPro" id="IPR056258">
    <property type="entry name" value="CILP-1/2_C"/>
</dbReference>
<dbReference type="InterPro" id="IPR056255">
    <property type="entry name" value="CILP-1/2_dom"/>
</dbReference>
<dbReference type="InterPro" id="IPR039675">
    <property type="entry name" value="CILP1/CILP2"/>
</dbReference>
<dbReference type="InterPro" id="IPR007110">
    <property type="entry name" value="Ig-like_dom"/>
</dbReference>
<dbReference type="InterPro" id="IPR036179">
    <property type="entry name" value="Ig-like_dom_sf"/>
</dbReference>
<dbReference type="InterPro" id="IPR013783">
    <property type="entry name" value="Ig-like_fold"/>
</dbReference>
<dbReference type="InterPro" id="IPR003599">
    <property type="entry name" value="Ig_sub"/>
</dbReference>
<dbReference type="InterPro" id="IPR003598">
    <property type="entry name" value="Ig_sub2"/>
</dbReference>
<dbReference type="InterPro" id="IPR000884">
    <property type="entry name" value="TSP1_rpt"/>
</dbReference>
<dbReference type="InterPro" id="IPR036383">
    <property type="entry name" value="TSP1_rpt_sf"/>
</dbReference>
<dbReference type="InterPro" id="IPR025155">
    <property type="entry name" value="WxxW_domain"/>
</dbReference>
<dbReference type="PANTHER" id="PTHR15031:SF0">
    <property type="entry name" value="CARTILAGE INTERMEDIATE LAYER PROTEIN 2"/>
    <property type="match status" value="1"/>
</dbReference>
<dbReference type="PANTHER" id="PTHR15031">
    <property type="entry name" value="CARTILAGE INTERMEDIATE LAYER PROTEIN CLIP"/>
    <property type="match status" value="1"/>
</dbReference>
<dbReference type="Pfam" id="PF13620">
    <property type="entry name" value="CarboxypepD_reg"/>
    <property type="match status" value="1"/>
</dbReference>
<dbReference type="Pfam" id="PF23591">
    <property type="entry name" value="CILP"/>
    <property type="match status" value="1"/>
</dbReference>
<dbReference type="Pfam" id="PF23708">
    <property type="entry name" value="CILP_5th"/>
    <property type="match status" value="1"/>
</dbReference>
<dbReference type="Pfam" id="PF23730">
    <property type="entry name" value="CILP_8th"/>
    <property type="match status" value="1"/>
</dbReference>
<dbReference type="Pfam" id="PF23599">
    <property type="entry name" value="CILP_C"/>
    <property type="match status" value="1"/>
</dbReference>
<dbReference type="Pfam" id="PF13927">
    <property type="entry name" value="Ig_3"/>
    <property type="match status" value="1"/>
</dbReference>
<dbReference type="Pfam" id="PF13330">
    <property type="entry name" value="Mucin2_WxxW"/>
    <property type="match status" value="1"/>
</dbReference>
<dbReference type="Pfam" id="PF00090">
    <property type="entry name" value="TSP_1"/>
    <property type="match status" value="1"/>
</dbReference>
<dbReference type="SMART" id="SM00409">
    <property type="entry name" value="IG"/>
    <property type="match status" value="1"/>
</dbReference>
<dbReference type="SMART" id="SM00408">
    <property type="entry name" value="IGc2"/>
    <property type="match status" value="1"/>
</dbReference>
<dbReference type="SMART" id="SM00209">
    <property type="entry name" value="TSP1"/>
    <property type="match status" value="1"/>
</dbReference>
<dbReference type="SUPFAM" id="SSF49464">
    <property type="entry name" value="Carboxypeptidase regulatory domain-like"/>
    <property type="match status" value="1"/>
</dbReference>
<dbReference type="SUPFAM" id="SSF48726">
    <property type="entry name" value="Immunoglobulin"/>
    <property type="match status" value="1"/>
</dbReference>
<dbReference type="SUPFAM" id="SSF82895">
    <property type="entry name" value="TSP-1 type 1 repeat"/>
    <property type="match status" value="1"/>
</dbReference>
<dbReference type="PROSITE" id="PS50835">
    <property type="entry name" value="IG_LIKE"/>
    <property type="match status" value="1"/>
</dbReference>
<dbReference type="PROSITE" id="PS50092">
    <property type="entry name" value="TSP1"/>
    <property type="match status" value="1"/>
</dbReference>
<gene>
    <name type="primary">CILP2</name>
</gene>
<accession>Q8IUL8</accession>
<accession>Q6NV88</accession>
<accession>Q8N4A6</accession>
<accession>Q8WV21</accession>
<name>CILP2_HUMAN</name>
<protein>
    <recommendedName>
        <fullName>Cartilage intermediate layer protein 2</fullName>
        <shortName>CILP-2</shortName>
    </recommendedName>
    <component>
        <recommendedName>
            <fullName>Cartilage intermediate layer protein 2 C1</fullName>
        </recommendedName>
    </component>
    <component>
        <recommendedName>
            <fullName>Cartilage intermediate layer protein 2 C2</fullName>
        </recommendedName>
    </component>
</protein>
<evidence type="ECO:0000250" key="1"/>
<evidence type="ECO:0000250" key="2">
    <source>
        <dbReference type="UniProtKB" id="O75339"/>
    </source>
</evidence>
<evidence type="ECO:0000255" key="3"/>
<evidence type="ECO:0000255" key="4">
    <source>
        <dbReference type="PROSITE-ProRule" id="PRU00210"/>
    </source>
</evidence>
<evidence type="ECO:0000256" key="5">
    <source>
        <dbReference type="SAM" id="MobiDB-lite"/>
    </source>
</evidence>
<evidence type="ECO:0000269" key="6">
    <source>
    </source>
</evidence>
<evidence type="ECO:0000269" key="7">
    <source>
    </source>
</evidence>
<evidence type="ECO:0000305" key="8"/>
<sequence>MASLLPLLCLCVVAAHLAGARDATPTEEPMATALGLERRSVYTGQPSPALEDWEEASEWTSWFNVDHPGGDGDFESLAAIRFYYGPARVCPRPLALEARTTDWALPSAVGERVHLNPTRGFWCLNREQPRGRRCSNYHVRFRCPLEASWGAWGPWGPCSGSCGPGRRLRRRHCPSPAGDACPGRPLEAQKCVRPRCPGCSLDTCECPDHILLGSVVTPSGQPLLGARVSLRDQPGTVATSDAHGTFRVPGVCADSRANIRAQMDGFSAGEAQAQANGSISVVTIILDKLEKPYLVKHPESRVREAGQNVTFCCKASGTPMPKKYSWFHNGTLLDRRAHGYGAHLELRGLRPDQAGIYHCKAWNEAGAVRSGTARLTVLAPGQPACDPRPREYLIKLPEDCGQPGSGPAYLDVGLCPDTRCPSLAGSSPRCGDASSRCCSVRRLERREIHCPGYVLPVKVVAECGCQKCLPPRGLVRGRVVAADSGEPLRFARILLGQEPIGFTAYQGDFTIEVPPSTQRLVVTFVDPSGEFMDAVRVLPFDPRGAGVYHEVKAMRKKAPVILHTSQSNTIPLGELEDEAPLGELVLPSGAFRRADGKPYSGPVEARVTFVDPRDLTSAASAPSDLRFVDSDGELAPLRTYGMFSVDLRAPGSAEQLQVGPVAVRVAASQIHMPGHVEALKLWSLNPETGLWEEESGFRREGSSGPRVRREERVFLVGNVEIRERRLFNLDVPERRRCFVKVRAYANDKFTPSEQVEGVVVTLVNLEPAPGFSANPRAWGRFDSAVTGPNGACLPAFCDADRPDAYTALVTATLGGEELEPAPSLPRPLPATVGVTQPYLDRLGYRRTDHDDPAFKRNGFRINLAKPRPGDPAEANGPVYPWRSLRECQGAPVTASHFRFARVEADKYEYNVVPFREGTPASWTGDLLAWWPNPQEFRACFLKVKIQGPQEYMVRSHNAGGSHPRTRGQLYGLRDARSVRDPERPGTSAACVEFKCSGMLFDQRQVDRTLVTIMPQGSCRRVAVNGLLRDYLTRHPPPVPAEDPAAFSMLAPLDPLGHNYGVYTVTDQSPRLAKEIAIGRCFDGSSDGFSREMKADAGTAVTFQCREPPAGRPSLFQRLLESPATALGDIRREMSEAAQAQARASGPLRTRRGRVRQ</sequence>
<feature type="signal peptide" evidence="3">
    <location>
        <begin position="1"/>
        <end position="20"/>
    </location>
</feature>
<feature type="chain" id="PRO_0000014678" description="Cartilage intermediate layer protein 2">
    <location>
        <begin position="21"/>
        <end position="1156"/>
    </location>
</feature>
<feature type="chain" id="PRO_0000014679" description="Cartilage intermediate layer protein 2 C1" evidence="3">
    <location>
        <begin position="21"/>
        <end position="709" status="uncertain"/>
    </location>
</feature>
<feature type="chain" id="PRO_0000014680" description="Cartilage intermediate layer protein 2 C2" evidence="3">
    <location>
        <begin position="710" status="uncertain"/>
        <end position="1156"/>
    </location>
</feature>
<feature type="domain" description="TSP type-1" evidence="4">
    <location>
        <begin position="146"/>
        <end position="197"/>
    </location>
</feature>
<feature type="domain" description="Ig-like C2-type">
    <location>
        <begin position="292"/>
        <end position="376"/>
    </location>
</feature>
<feature type="region of interest" description="Disordered" evidence="5">
    <location>
        <begin position="1134"/>
        <end position="1156"/>
    </location>
</feature>
<feature type="glycosylation site" description="N-linked (GlcNAc...) asparagine" evidence="3">
    <location>
        <position position="276"/>
    </location>
</feature>
<feature type="glycosylation site" description="N-linked (GlcNAc...) asparagine" evidence="3">
    <location>
        <position position="308"/>
    </location>
</feature>
<feature type="glycosylation site" description="N-linked (GlcNAc...) asparagine" evidence="3">
    <location>
        <position position="329"/>
    </location>
</feature>
<feature type="disulfide bond" evidence="1">
    <location>
        <begin position="158"/>
        <end position="191"/>
    </location>
</feature>
<feature type="disulfide bond" evidence="1">
    <location>
        <begin position="162"/>
        <end position="196"/>
    </location>
</feature>
<feature type="disulfide bond" evidence="1">
    <location>
        <begin position="173"/>
        <end position="181"/>
    </location>
</feature>
<feature type="disulfide bond" evidence="1">
    <location>
        <begin position="313"/>
        <end position="359"/>
    </location>
</feature>
<feature type="sequence conflict" description="In Ref. 1; AAN17826." evidence="8" ref="1">
    <original>A</original>
    <variation>G</variation>
    <location>
        <position position="768"/>
    </location>
</feature>
<keyword id="KW-0165">Cleavage on pair of basic residues</keyword>
<keyword id="KW-1015">Disulfide bond</keyword>
<keyword id="KW-0272">Extracellular matrix</keyword>
<keyword id="KW-0325">Glycoprotein</keyword>
<keyword id="KW-0393">Immunoglobulin domain</keyword>
<keyword id="KW-1267">Proteomics identification</keyword>
<keyword id="KW-1185">Reference proteome</keyword>
<keyword id="KW-0964">Secreted</keyword>
<keyword id="KW-0732">Signal</keyword>
<reference key="1">
    <citation type="journal article" date="2003" name="Arthritis Rheum.">
        <title>One of two chondrocyte-expressed isoforms of cartilage intermediate-layer protein functions as an insulin-like growth factor 1 antagonist.</title>
        <authorList>
            <person name="Johnson K."/>
            <person name="Farley D."/>
            <person name="Hu S.-I."/>
            <person name="Terkeltaub R."/>
        </authorList>
    </citation>
    <scope>NUCLEOTIDE SEQUENCE [MRNA]</scope>
    <scope>TISSUE SPECIFICITY</scope>
    <source>
        <tissue>Osteoarthritic cartilage</tissue>
    </source>
</reference>
<reference key="2">
    <citation type="journal article" date="2004" name="Genome Res.">
        <title>The status, quality, and expansion of the NIH full-length cDNA project: the Mammalian Gene Collection (MGC).</title>
        <authorList>
            <consortium name="The MGC Project Team"/>
        </authorList>
    </citation>
    <scope>NUCLEOTIDE SEQUENCE [LARGE SCALE MRNA]</scope>
    <source>
        <tissue>Brain</tissue>
    </source>
</reference>
<reference key="3">
    <citation type="journal article" date="2011" name="J. Biol. Chem.">
        <title>Cartilage intermediate layer protein 2 (CILP-2) is expressed in articular and meniscal cartilage and down-regulated in experimental osteoarthritis.</title>
        <authorList>
            <person name="Bernardo B.C."/>
            <person name="Belluoccio D."/>
            <person name="Rowley L."/>
            <person name="Little C.B."/>
            <person name="Hansen U."/>
            <person name="Bateman J.F."/>
        </authorList>
    </citation>
    <scope>SUBCELLULAR LOCATION</scope>
    <scope>TISSUE SPECIFICITY</scope>
</reference>
<organism>
    <name type="scientific">Homo sapiens</name>
    <name type="common">Human</name>
    <dbReference type="NCBI Taxonomy" id="9606"/>
    <lineage>
        <taxon>Eukaryota</taxon>
        <taxon>Metazoa</taxon>
        <taxon>Chordata</taxon>
        <taxon>Craniata</taxon>
        <taxon>Vertebrata</taxon>
        <taxon>Euteleostomi</taxon>
        <taxon>Mammalia</taxon>
        <taxon>Eutheria</taxon>
        <taxon>Euarchontoglires</taxon>
        <taxon>Primates</taxon>
        <taxon>Haplorrhini</taxon>
        <taxon>Catarrhini</taxon>
        <taxon>Hominidae</taxon>
        <taxon>Homo</taxon>
    </lineage>
</organism>